<organism>
    <name type="scientific">Pseudomonas putida (strain ATCC 700007 / DSM 6899 / JCM 31910 / BCRC 17059 / LMG 24140 / F1)</name>
    <dbReference type="NCBI Taxonomy" id="351746"/>
    <lineage>
        <taxon>Bacteria</taxon>
        <taxon>Pseudomonadati</taxon>
        <taxon>Pseudomonadota</taxon>
        <taxon>Gammaproteobacteria</taxon>
        <taxon>Pseudomonadales</taxon>
        <taxon>Pseudomonadaceae</taxon>
        <taxon>Pseudomonas</taxon>
    </lineage>
</organism>
<accession>Q51983</accession>
<accession>A5W4F8</accession>
<proteinExistence type="inferred from homology"/>
<keyword id="KW-0058">Aromatic hydrocarbons catabolism</keyword>
<keyword id="KW-0456">Lyase</keyword>
<keyword id="KW-0464">Manganese</keyword>
<keyword id="KW-0479">Metal-binding</keyword>
<sequence>MFDTRKKIYVSDVTLRDGMHAVRHQYSLADAERIARALDEAGVDSIEVAHGDGLQGSSFNYGFGAHTDLEWIERVAATVRRAKIATLLLPGIGTVHDLKNANAAGASVVRVATHCTEADISQQHIEYARKLGMDTVGFLMMSHMTTPTALAVEAKKMESYGAQCIYVVDSGGAMNMYDIADRFKALKDVLDPSTQTGMHAHHNLSLGVANSIVALEYGCDRIDASLTGMGAGAGNAPLEVFIAAVDRMGLKHGCDVRKLIDAAEEIVRPLQERPVRVDRETLALGYAGVYSSFLRHTEAAAHKYGLDAFEILVELGRRRMVGGQEDMIVDVALDMMSRKPQGTMRDVISH</sequence>
<reference key="1">
    <citation type="journal article" date="1996" name="J. Bacteriol.">
        <title>p-cumate catabolic pathway in Pseudomonas putida F1: cloning and characterization of DNA carrying the cmt operon.</title>
        <authorList>
            <person name="Eaton R.W."/>
        </authorList>
    </citation>
    <scope>NUCLEOTIDE SEQUENCE [GENOMIC DNA]</scope>
</reference>
<reference key="2">
    <citation type="submission" date="2007-05" db="EMBL/GenBank/DDBJ databases">
        <title>Complete sequence of Pseudomonas putida F1.</title>
        <authorList>
            <consortium name="US DOE Joint Genome Institute"/>
            <person name="Copeland A."/>
            <person name="Lucas S."/>
            <person name="Lapidus A."/>
            <person name="Barry K."/>
            <person name="Detter J.C."/>
            <person name="Glavina del Rio T."/>
            <person name="Hammon N."/>
            <person name="Israni S."/>
            <person name="Dalin E."/>
            <person name="Tice H."/>
            <person name="Pitluck S."/>
            <person name="Chain P."/>
            <person name="Malfatti S."/>
            <person name="Shin M."/>
            <person name="Vergez L."/>
            <person name="Schmutz J."/>
            <person name="Larimer F."/>
            <person name="Land M."/>
            <person name="Hauser L."/>
            <person name="Kyrpides N."/>
            <person name="Lykidis A."/>
            <person name="Parales R."/>
            <person name="Richardson P."/>
        </authorList>
    </citation>
    <scope>NUCLEOTIDE SEQUENCE [LARGE SCALE GENOMIC DNA]</scope>
    <source>
        <strain>ATCC 700007 / DSM 6899 / JCM 31910 / BCRC 17059 / LMG 24140 / F1</strain>
    </source>
</reference>
<name>HOA2_PSEP1</name>
<gene>
    <name type="primary">cmtG</name>
    <name type="ordered locus">Pput_2888</name>
</gene>
<dbReference type="EC" id="4.1.3.39" evidence="1"/>
<dbReference type="EMBL" id="U24215">
    <property type="protein sequence ID" value="AAB62295.1"/>
    <property type="molecule type" value="Genomic_DNA"/>
</dbReference>
<dbReference type="EMBL" id="CP000712">
    <property type="protein sequence ID" value="ABQ79018.1"/>
    <property type="molecule type" value="Genomic_DNA"/>
</dbReference>
<dbReference type="SMR" id="Q51983"/>
<dbReference type="KEGG" id="ppf:Pput_2888"/>
<dbReference type="eggNOG" id="COG0119">
    <property type="taxonomic scope" value="Bacteria"/>
</dbReference>
<dbReference type="HOGENOM" id="CLU_049173_0_0_6"/>
<dbReference type="BioCyc" id="MetaCyc:MONOMER-353"/>
<dbReference type="UniPathway" id="UPA00937">
    <property type="reaction ID" value="UER00907"/>
</dbReference>
<dbReference type="GO" id="GO:0003852">
    <property type="term" value="F:2-isopropylmalate synthase activity"/>
    <property type="evidence" value="ECO:0007669"/>
    <property type="project" value="TreeGrafter"/>
</dbReference>
<dbReference type="GO" id="GO:0008701">
    <property type="term" value="F:4-hydroxy-2-oxovalerate aldolase activity"/>
    <property type="evidence" value="ECO:0007669"/>
    <property type="project" value="UniProtKB-UniRule"/>
</dbReference>
<dbReference type="GO" id="GO:0030145">
    <property type="term" value="F:manganese ion binding"/>
    <property type="evidence" value="ECO:0007669"/>
    <property type="project" value="UniProtKB-UniRule"/>
</dbReference>
<dbReference type="GO" id="GO:0009056">
    <property type="term" value="P:catabolic process"/>
    <property type="evidence" value="ECO:0007669"/>
    <property type="project" value="UniProtKB-KW"/>
</dbReference>
<dbReference type="GO" id="GO:0009098">
    <property type="term" value="P:L-leucine biosynthetic process"/>
    <property type="evidence" value="ECO:0007669"/>
    <property type="project" value="TreeGrafter"/>
</dbReference>
<dbReference type="CDD" id="cd07943">
    <property type="entry name" value="DRE_TIM_HOA"/>
    <property type="match status" value="1"/>
</dbReference>
<dbReference type="FunFam" id="1.10.8.60:FF:000042">
    <property type="entry name" value="4-hydroxy-2-oxovalerate aldolase"/>
    <property type="match status" value="1"/>
</dbReference>
<dbReference type="Gene3D" id="1.10.8.60">
    <property type="match status" value="1"/>
</dbReference>
<dbReference type="Gene3D" id="3.20.20.70">
    <property type="entry name" value="Aldolase class I"/>
    <property type="match status" value="1"/>
</dbReference>
<dbReference type="HAMAP" id="MF_01656">
    <property type="entry name" value="HOA"/>
    <property type="match status" value="1"/>
</dbReference>
<dbReference type="InterPro" id="IPR050073">
    <property type="entry name" value="2-IPM_HCS-like"/>
</dbReference>
<dbReference type="InterPro" id="IPR017629">
    <property type="entry name" value="4OH_2_O-val_aldolase"/>
</dbReference>
<dbReference type="InterPro" id="IPR013785">
    <property type="entry name" value="Aldolase_TIM"/>
</dbReference>
<dbReference type="InterPro" id="IPR012425">
    <property type="entry name" value="DmpG_comm"/>
</dbReference>
<dbReference type="InterPro" id="IPR035685">
    <property type="entry name" value="DRE_TIM_HOA"/>
</dbReference>
<dbReference type="InterPro" id="IPR000891">
    <property type="entry name" value="PYR_CT"/>
</dbReference>
<dbReference type="NCBIfam" id="TIGR03217">
    <property type="entry name" value="4OH_2_O_val_ald"/>
    <property type="match status" value="1"/>
</dbReference>
<dbReference type="NCBIfam" id="NF006049">
    <property type="entry name" value="PRK08195.1"/>
    <property type="match status" value="1"/>
</dbReference>
<dbReference type="PANTHER" id="PTHR10277:SF9">
    <property type="entry name" value="2-ISOPROPYLMALATE SYNTHASE 1, CHLOROPLASTIC-RELATED"/>
    <property type="match status" value="1"/>
</dbReference>
<dbReference type="PANTHER" id="PTHR10277">
    <property type="entry name" value="HOMOCITRATE SYNTHASE-RELATED"/>
    <property type="match status" value="1"/>
</dbReference>
<dbReference type="Pfam" id="PF07836">
    <property type="entry name" value="DmpG_comm"/>
    <property type="match status" value="1"/>
</dbReference>
<dbReference type="Pfam" id="PF00682">
    <property type="entry name" value="HMGL-like"/>
    <property type="match status" value="1"/>
</dbReference>
<dbReference type="SUPFAM" id="SSF51569">
    <property type="entry name" value="Aldolase"/>
    <property type="match status" value="1"/>
</dbReference>
<dbReference type="SUPFAM" id="SSF89000">
    <property type="entry name" value="post-HMGL domain-like"/>
    <property type="match status" value="1"/>
</dbReference>
<dbReference type="PROSITE" id="PS50991">
    <property type="entry name" value="PYR_CT"/>
    <property type="match status" value="1"/>
</dbReference>
<comment type="function">
    <text>Catalyzes the retro-aldol cleavage of 4-hydroxy-2-oxopentanoate to pyruvate and acetaldehyde. Is involved in the meta-cleavage pathway for the degradation of p-cumate.</text>
</comment>
<comment type="catalytic activity">
    <reaction evidence="1">
        <text>(S)-4-hydroxy-2-oxopentanoate = acetaldehyde + pyruvate</text>
        <dbReference type="Rhea" id="RHEA:22624"/>
        <dbReference type="ChEBI" id="CHEBI:15343"/>
        <dbReference type="ChEBI" id="CHEBI:15361"/>
        <dbReference type="ChEBI" id="CHEBI:73143"/>
        <dbReference type="EC" id="4.1.3.39"/>
    </reaction>
</comment>
<comment type="pathway">
    <text>Aromatic compound metabolism; p-cumate degradation; acetaldehyde and pyruvate from p-cumate: step 7/7.</text>
</comment>
<comment type="similarity">
    <text evidence="1 2">Belongs to the 4-hydroxy-2-oxovalerate aldolase family.</text>
</comment>
<evidence type="ECO:0000255" key="1">
    <source>
        <dbReference type="HAMAP-Rule" id="MF_01656"/>
    </source>
</evidence>
<evidence type="ECO:0000305" key="2"/>
<protein>
    <recommendedName>
        <fullName evidence="1">4-hydroxy-2-oxovalerate aldolase 2</fullName>
        <shortName evidence="1">HOA 2</shortName>
        <ecNumber evidence="1">4.1.3.39</ecNumber>
    </recommendedName>
    <alternativeName>
        <fullName evidence="1">4-hydroxy-2-keto-pentanoic acid aldolase 2</fullName>
    </alternativeName>
    <alternativeName>
        <fullName evidence="1">4-hydroxy-2-oxopentanoate aldolase 2</fullName>
    </alternativeName>
</protein>
<feature type="chain" id="PRO_0000089884" description="4-hydroxy-2-oxovalerate aldolase 2">
    <location>
        <begin position="1"/>
        <end position="350"/>
    </location>
</feature>
<feature type="domain" description="Pyruvate carboxyltransferase" evidence="1">
    <location>
        <begin position="8"/>
        <end position="260"/>
    </location>
</feature>
<feature type="active site" description="Proton acceptor" evidence="1">
    <location>
        <position position="20"/>
    </location>
</feature>
<feature type="binding site" evidence="1">
    <location>
        <begin position="16"/>
        <end position="17"/>
    </location>
    <ligand>
        <name>substrate</name>
    </ligand>
</feature>
<feature type="binding site" evidence="1">
    <location>
        <position position="17"/>
    </location>
    <ligand>
        <name>Mn(2+)</name>
        <dbReference type="ChEBI" id="CHEBI:29035"/>
    </ligand>
</feature>
<feature type="binding site" evidence="1">
    <location>
        <position position="170"/>
    </location>
    <ligand>
        <name>substrate</name>
    </ligand>
</feature>
<feature type="binding site" evidence="1">
    <location>
        <position position="199"/>
    </location>
    <ligand>
        <name>Mn(2+)</name>
        <dbReference type="ChEBI" id="CHEBI:29035"/>
    </ligand>
</feature>
<feature type="binding site" evidence="1">
    <location>
        <position position="199"/>
    </location>
    <ligand>
        <name>substrate</name>
    </ligand>
</feature>
<feature type="binding site" evidence="1">
    <location>
        <position position="201"/>
    </location>
    <ligand>
        <name>Mn(2+)</name>
        <dbReference type="ChEBI" id="CHEBI:29035"/>
    </ligand>
</feature>
<feature type="binding site" evidence="1">
    <location>
        <position position="290"/>
    </location>
    <ligand>
        <name>substrate</name>
    </ligand>
</feature>
<feature type="site" description="Transition state stabilizer" evidence="1">
    <location>
        <position position="16"/>
    </location>
</feature>